<gene>
    <name evidence="2" type="primary">deoD</name>
    <name type="ordered locus">LACR_1003</name>
</gene>
<accession>Q02ZT0</accession>
<proteinExistence type="inferred from homology"/>
<name>DEOD_LACLS</name>
<feature type="chain" id="PRO_1000069636" description="Purine nucleoside phosphorylase DeoD-type">
    <location>
        <begin position="1"/>
        <end position="234"/>
    </location>
</feature>
<feature type="active site" description="Proton donor" evidence="2">
    <location>
        <position position="203"/>
    </location>
</feature>
<feature type="binding site" evidence="1">
    <location>
        <position position="5"/>
    </location>
    <ligand>
        <name>a purine D-ribonucleoside</name>
        <dbReference type="ChEBI" id="CHEBI:142355"/>
        <note>ligand shared between dimeric partners</note>
    </ligand>
</feature>
<feature type="binding site" description="in other chain" evidence="1">
    <location>
        <position position="21"/>
    </location>
    <ligand>
        <name>phosphate</name>
        <dbReference type="ChEBI" id="CHEBI:43474"/>
        <note>ligand shared between dimeric partners</note>
    </ligand>
</feature>
<feature type="binding site" description="in other chain" evidence="1">
    <location>
        <position position="25"/>
    </location>
    <ligand>
        <name>phosphate</name>
        <dbReference type="ChEBI" id="CHEBI:43474"/>
        <note>ligand shared between dimeric partners</note>
    </ligand>
</feature>
<feature type="binding site" evidence="1">
    <location>
        <position position="44"/>
    </location>
    <ligand>
        <name>phosphate</name>
        <dbReference type="ChEBI" id="CHEBI:43474"/>
        <note>ligand shared between dimeric partners</note>
    </ligand>
</feature>
<feature type="binding site" description="in other chain" evidence="1">
    <location>
        <begin position="88"/>
        <end position="91"/>
    </location>
    <ligand>
        <name>phosphate</name>
        <dbReference type="ChEBI" id="CHEBI:43474"/>
        <note>ligand shared between dimeric partners</note>
    </ligand>
</feature>
<feature type="binding site" description="in other chain" evidence="1">
    <location>
        <begin position="178"/>
        <end position="180"/>
    </location>
    <ligand>
        <name>a purine D-ribonucleoside</name>
        <dbReference type="ChEBI" id="CHEBI:142355"/>
        <note>ligand shared between dimeric partners</note>
    </ligand>
</feature>
<feature type="binding site" description="in other chain" evidence="1">
    <location>
        <begin position="202"/>
        <end position="203"/>
    </location>
    <ligand>
        <name>a purine D-ribonucleoside</name>
        <dbReference type="ChEBI" id="CHEBI:142355"/>
        <note>ligand shared between dimeric partners</note>
    </ligand>
</feature>
<feature type="site" description="Important for catalytic activity" evidence="2">
    <location>
        <position position="216"/>
    </location>
</feature>
<comment type="function">
    <text evidence="2">Catalyzes the reversible phosphorolytic breakdown of the N-glycosidic bond in the beta-(deoxy)ribonucleoside molecules, with the formation of the corresponding free purine bases and pentose-1-phosphate.</text>
</comment>
<comment type="catalytic activity">
    <reaction evidence="2">
        <text>a purine D-ribonucleoside + phosphate = a purine nucleobase + alpha-D-ribose 1-phosphate</text>
        <dbReference type="Rhea" id="RHEA:19805"/>
        <dbReference type="ChEBI" id="CHEBI:26386"/>
        <dbReference type="ChEBI" id="CHEBI:43474"/>
        <dbReference type="ChEBI" id="CHEBI:57720"/>
        <dbReference type="ChEBI" id="CHEBI:142355"/>
        <dbReference type="EC" id="2.4.2.1"/>
    </reaction>
</comment>
<comment type="catalytic activity">
    <reaction evidence="2">
        <text>a purine 2'-deoxy-D-ribonucleoside + phosphate = a purine nucleobase + 2-deoxy-alpha-D-ribose 1-phosphate</text>
        <dbReference type="Rhea" id="RHEA:36431"/>
        <dbReference type="ChEBI" id="CHEBI:26386"/>
        <dbReference type="ChEBI" id="CHEBI:43474"/>
        <dbReference type="ChEBI" id="CHEBI:57259"/>
        <dbReference type="ChEBI" id="CHEBI:142361"/>
        <dbReference type="EC" id="2.4.2.1"/>
    </reaction>
</comment>
<comment type="subunit">
    <text evidence="2">Homohexamer; trimer of homodimers.</text>
</comment>
<comment type="similarity">
    <text evidence="2">Belongs to the PNP/UDP phosphorylase family.</text>
</comment>
<protein>
    <recommendedName>
        <fullName evidence="2">Purine nucleoside phosphorylase DeoD-type</fullName>
        <shortName evidence="2">PNP</shortName>
        <ecNumber evidence="2">2.4.2.1</ecNumber>
    </recommendedName>
</protein>
<organism>
    <name type="scientific">Lactococcus lactis subsp. cremoris (strain SK11)</name>
    <dbReference type="NCBI Taxonomy" id="272622"/>
    <lineage>
        <taxon>Bacteria</taxon>
        <taxon>Bacillati</taxon>
        <taxon>Bacillota</taxon>
        <taxon>Bacilli</taxon>
        <taxon>Lactobacillales</taxon>
        <taxon>Streptococcaceae</taxon>
        <taxon>Lactococcus</taxon>
        <taxon>Lactococcus cremoris subsp. cremoris</taxon>
    </lineage>
</organism>
<evidence type="ECO:0000250" key="1">
    <source>
        <dbReference type="UniProtKB" id="P50389"/>
    </source>
</evidence>
<evidence type="ECO:0000255" key="2">
    <source>
        <dbReference type="HAMAP-Rule" id="MF_01627"/>
    </source>
</evidence>
<keyword id="KW-0328">Glycosyltransferase</keyword>
<keyword id="KW-0808">Transferase</keyword>
<sequence>MPTPHIEAQKGEIADKILLPGDPLRAKFIAENFLEDAVQFNQVRGMLGFTGTYKGHRVSVMGTGMGIPSISIYANELITEYGVKRLIRVGTAGSVNEDVHIRDLVIGQAAATTSAIVRHDFPDFDFPQIADFDLLDKAYHIAKDLGITTHVGNILSSDLFYGGPDAVKVGKLGVKAVEMEAAGLYYLGAKYKVQTLGIMTISDHILTGESTTSEERQLTFTDMMKVGLETLIAE</sequence>
<reference key="1">
    <citation type="journal article" date="2006" name="Proc. Natl. Acad. Sci. U.S.A.">
        <title>Comparative genomics of the lactic acid bacteria.</title>
        <authorList>
            <person name="Makarova K.S."/>
            <person name="Slesarev A."/>
            <person name="Wolf Y.I."/>
            <person name="Sorokin A."/>
            <person name="Mirkin B."/>
            <person name="Koonin E.V."/>
            <person name="Pavlov A."/>
            <person name="Pavlova N."/>
            <person name="Karamychev V."/>
            <person name="Polouchine N."/>
            <person name="Shakhova V."/>
            <person name="Grigoriev I."/>
            <person name="Lou Y."/>
            <person name="Rohksar D."/>
            <person name="Lucas S."/>
            <person name="Huang K."/>
            <person name="Goodstein D.M."/>
            <person name="Hawkins T."/>
            <person name="Plengvidhya V."/>
            <person name="Welker D."/>
            <person name="Hughes J."/>
            <person name="Goh Y."/>
            <person name="Benson A."/>
            <person name="Baldwin K."/>
            <person name="Lee J.-H."/>
            <person name="Diaz-Muniz I."/>
            <person name="Dosti B."/>
            <person name="Smeianov V."/>
            <person name="Wechter W."/>
            <person name="Barabote R."/>
            <person name="Lorca G."/>
            <person name="Altermann E."/>
            <person name="Barrangou R."/>
            <person name="Ganesan B."/>
            <person name="Xie Y."/>
            <person name="Rawsthorne H."/>
            <person name="Tamir D."/>
            <person name="Parker C."/>
            <person name="Breidt F."/>
            <person name="Broadbent J.R."/>
            <person name="Hutkins R."/>
            <person name="O'Sullivan D."/>
            <person name="Steele J."/>
            <person name="Unlu G."/>
            <person name="Saier M.H. Jr."/>
            <person name="Klaenhammer T."/>
            <person name="Richardson P."/>
            <person name="Kozyavkin S."/>
            <person name="Weimer B.C."/>
            <person name="Mills D.A."/>
        </authorList>
    </citation>
    <scope>NUCLEOTIDE SEQUENCE [LARGE SCALE GENOMIC DNA]</scope>
    <source>
        <strain>SK11</strain>
    </source>
</reference>
<dbReference type="EC" id="2.4.2.1" evidence="2"/>
<dbReference type="EMBL" id="CP000425">
    <property type="protein sequence ID" value="ABJ72542.1"/>
    <property type="molecule type" value="Genomic_DNA"/>
</dbReference>
<dbReference type="RefSeq" id="WP_011675883.1">
    <property type="nucleotide sequence ID" value="NC_008527.1"/>
</dbReference>
<dbReference type="SMR" id="Q02ZT0"/>
<dbReference type="GeneID" id="61109229"/>
<dbReference type="KEGG" id="llc:LACR_1003"/>
<dbReference type="HOGENOM" id="CLU_068457_2_0_9"/>
<dbReference type="Proteomes" id="UP000000240">
    <property type="component" value="Chromosome"/>
</dbReference>
<dbReference type="GO" id="GO:0005829">
    <property type="term" value="C:cytosol"/>
    <property type="evidence" value="ECO:0007669"/>
    <property type="project" value="TreeGrafter"/>
</dbReference>
<dbReference type="GO" id="GO:0004731">
    <property type="term" value="F:purine-nucleoside phosphorylase activity"/>
    <property type="evidence" value="ECO:0007669"/>
    <property type="project" value="UniProtKB-UniRule"/>
</dbReference>
<dbReference type="GO" id="GO:0006152">
    <property type="term" value="P:purine nucleoside catabolic process"/>
    <property type="evidence" value="ECO:0007669"/>
    <property type="project" value="TreeGrafter"/>
</dbReference>
<dbReference type="CDD" id="cd09006">
    <property type="entry name" value="PNP_EcPNPI-like"/>
    <property type="match status" value="1"/>
</dbReference>
<dbReference type="Gene3D" id="3.40.50.1580">
    <property type="entry name" value="Nucleoside phosphorylase domain"/>
    <property type="match status" value="1"/>
</dbReference>
<dbReference type="HAMAP" id="MF_01627">
    <property type="entry name" value="Pur_nucleosid_phosp"/>
    <property type="match status" value="1"/>
</dbReference>
<dbReference type="InterPro" id="IPR004402">
    <property type="entry name" value="DeoD-type"/>
</dbReference>
<dbReference type="InterPro" id="IPR018016">
    <property type="entry name" value="Nucleoside_phosphorylase_CS"/>
</dbReference>
<dbReference type="InterPro" id="IPR000845">
    <property type="entry name" value="Nucleoside_phosphorylase_d"/>
</dbReference>
<dbReference type="InterPro" id="IPR035994">
    <property type="entry name" value="Nucleoside_phosphorylase_sf"/>
</dbReference>
<dbReference type="NCBIfam" id="TIGR00107">
    <property type="entry name" value="deoD"/>
    <property type="match status" value="1"/>
</dbReference>
<dbReference type="NCBIfam" id="NF004489">
    <property type="entry name" value="PRK05819.1"/>
    <property type="match status" value="1"/>
</dbReference>
<dbReference type="PANTHER" id="PTHR43691:SF11">
    <property type="entry name" value="FI09636P-RELATED"/>
    <property type="match status" value="1"/>
</dbReference>
<dbReference type="PANTHER" id="PTHR43691">
    <property type="entry name" value="URIDINE PHOSPHORYLASE"/>
    <property type="match status" value="1"/>
</dbReference>
<dbReference type="Pfam" id="PF01048">
    <property type="entry name" value="PNP_UDP_1"/>
    <property type="match status" value="1"/>
</dbReference>
<dbReference type="SUPFAM" id="SSF53167">
    <property type="entry name" value="Purine and uridine phosphorylases"/>
    <property type="match status" value="1"/>
</dbReference>
<dbReference type="PROSITE" id="PS01232">
    <property type="entry name" value="PNP_UDP_1"/>
    <property type="match status" value="1"/>
</dbReference>